<protein>
    <recommendedName>
        <fullName>Growth factor receptor-bound protein 2</fullName>
    </recommendedName>
    <alternativeName>
        <fullName>Adapter protein GRB2</fullName>
    </alternativeName>
    <alternativeName>
        <fullName>SH2/SH3 adapter GRB2</fullName>
    </alternativeName>
</protein>
<dbReference type="EMBL" id="L19258">
    <property type="protein sequence ID" value="AAA16318.1"/>
    <property type="molecule type" value="mRNA"/>
</dbReference>
<dbReference type="PIR" id="JT0664">
    <property type="entry name" value="JT0664"/>
</dbReference>
<dbReference type="RefSeq" id="NP_989742.1">
    <property type="nucleotide sequence ID" value="NM_204411.1"/>
</dbReference>
<dbReference type="BMRB" id="Q07883"/>
<dbReference type="SMR" id="Q07883"/>
<dbReference type="FunCoup" id="Q07883">
    <property type="interactions" value="3148"/>
</dbReference>
<dbReference type="IntAct" id="Q07883">
    <property type="interactions" value="2"/>
</dbReference>
<dbReference type="MINT" id="Q07883"/>
<dbReference type="STRING" id="9031.ENSGALP00000012993"/>
<dbReference type="GlyGen" id="Q07883">
    <property type="glycosylation" value="1 site"/>
</dbReference>
<dbReference type="PaxDb" id="9031-ENSGALP00000012993"/>
<dbReference type="GeneID" id="386572"/>
<dbReference type="KEGG" id="gga:386572"/>
<dbReference type="CTD" id="2885"/>
<dbReference type="VEuPathDB" id="HostDB:geneid_386572"/>
<dbReference type="eggNOG" id="KOG3601">
    <property type="taxonomic scope" value="Eukaryota"/>
</dbReference>
<dbReference type="InParanoid" id="Q07883"/>
<dbReference type="OrthoDB" id="10255964at2759"/>
<dbReference type="PhylomeDB" id="Q07883"/>
<dbReference type="PRO" id="PR:Q07883"/>
<dbReference type="Proteomes" id="UP000000539">
    <property type="component" value="Unassembled WGS sequence"/>
</dbReference>
<dbReference type="GO" id="GO:0008180">
    <property type="term" value="C:COP9 signalosome"/>
    <property type="evidence" value="ECO:0000318"/>
    <property type="project" value="GO_Central"/>
</dbReference>
<dbReference type="GO" id="GO:0005737">
    <property type="term" value="C:cytoplasm"/>
    <property type="evidence" value="ECO:0000250"/>
    <property type="project" value="UniProtKB"/>
</dbReference>
<dbReference type="GO" id="GO:0005768">
    <property type="term" value="C:endosome"/>
    <property type="evidence" value="ECO:0000250"/>
    <property type="project" value="UniProtKB"/>
</dbReference>
<dbReference type="GO" id="GO:0005794">
    <property type="term" value="C:Golgi apparatus"/>
    <property type="evidence" value="ECO:0007669"/>
    <property type="project" value="UniProtKB-SubCell"/>
</dbReference>
<dbReference type="GO" id="GO:0005654">
    <property type="term" value="C:nucleoplasm"/>
    <property type="evidence" value="ECO:0000318"/>
    <property type="project" value="GO_Central"/>
</dbReference>
<dbReference type="GO" id="GO:0005634">
    <property type="term" value="C:nucleus"/>
    <property type="evidence" value="ECO:0000250"/>
    <property type="project" value="UniProtKB"/>
</dbReference>
<dbReference type="GO" id="GO:0005886">
    <property type="term" value="C:plasma membrane"/>
    <property type="evidence" value="ECO:0000318"/>
    <property type="project" value="GO_Central"/>
</dbReference>
<dbReference type="GO" id="GO:0005154">
    <property type="term" value="F:epidermal growth factor receptor binding"/>
    <property type="evidence" value="ECO:0000318"/>
    <property type="project" value="GO_Central"/>
</dbReference>
<dbReference type="GO" id="GO:0001784">
    <property type="term" value="F:phosphotyrosine residue binding"/>
    <property type="evidence" value="ECO:0000318"/>
    <property type="project" value="GO_Central"/>
</dbReference>
<dbReference type="GO" id="GO:0043408">
    <property type="term" value="P:regulation of MAPK cascade"/>
    <property type="evidence" value="ECO:0000318"/>
    <property type="project" value="GO_Central"/>
</dbReference>
<dbReference type="GO" id="GO:0007165">
    <property type="term" value="P:signal transduction"/>
    <property type="evidence" value="ECO:0000318"/>
    <property type="project" value="GO_Central"/>
</dbReference>
<dbReference type="CDD" id="cd09941">
    <property type="entry name" value="SH2_Grb2_like"/>
    <property type="match status" value="1"/>
</dbReference>
<dbReference type="CDD" id="cd11949">
    <property type="entry name" value="SH3_GRB2_C"/>
    <property type="match status" value="1"/>
</dbReference>
<dbReference type="CDD" id="cd11946">
    <property type="entry name" value="SH3_GRB2_N"/>
    <property type="match status" value="1"/>
</dbReference>
<dbReference type="FunFam" id="2.30.30.40:FF:000067">
    <property type="entry name" value="Growth factor receptor-bound protein 2"/>
    <property type="match status" value="1"/>
</dbReference>
<dbReference type="FunFam" id="2.30.30.40:FF:000076">
    <property type="entry name" value="Growth factor receptor-bound protein 2"/>
    <property type="match status" value="1"/>
</dbReference>
<dbReference type="FunFam" id="3.30.505.10:FF:000022">
    <property type="entry name" value="Growth factor receptor-bound protein 2"/>
    <property type="match status" value="1"/>
</dbReference>
<dbReference type="Gene3D" id="3.30.505.10">
    <property type="entry name" value="SH2 domain"/>
    <property type="match status" value="1"/>
</dbReference>
<dbReference type="Gene3D" id="2.30.30.40">
    <property type="entry name" value="SH3 Domains"/>
    <property type="match status" value="2"/>
</dbReference>
<dbReference type="InterPro" id="IPR043539">
    <property type="entry name" value="Grb2-like"/>
</dbReference>
<dbReference type="InterPro" id="IPR035643">
    <property type="entry name" value="GRB2_C_SH3"/>
</dbReference>
<dbReference type="InterPro" id="IPR035641">
    <property type="entry name" value="GRB2_N_SH3"/>
</dbReference>
<dbReference type="InterPro" id="IPR000980">
    <property type="entry name" value="SH2"/>
</dbReference>
<dbReference type="InterPro" id="IPR036860">
    <property type="entry name" value="SH2_dom_sf"/>
</dbReference>
<dbReference type="InterPro" id="IPR036028">
    <property type="entry name" value="SH3-like_dom_sf"/>
</dbReference>
<dbReference type="InterPro" id="IPR001452">
    <property type="entry name" value="SH3_domain"/>
</dbReference>
<dbReference type="PANTHER" id="PTHR46037">
    <property type="entry name" value="PROTEIN ENHANCER OF SEVENLESS 2B"/>
    <property type="match status" value="1"/>
</dbReference>
<dbReference type="Pfam" id="PF00017">
    <property type="entry name" value="SH2"/>
    <property type="match status" value="1"/>
</dbReference>
<dbReference type="Pfam" id="PF00018">
    <property type="entry name" value="SH3_1"/>
    <property type="match status" value="2"/>
</dbReference>
<dbReference type="PRINTS" id="PR00499">
    <property type="entry name" value="P67PHOX"/>
</dbReference>
<dbReference type="PRINTS" id="PR00401">
    <property type="entry name" value="SH2DOMAIN"/>
</dbReference>
<dbReference type="PRINTS" id="PR00452">
    <property type="entry name" value="SH3DOMAIN"/>
</dbReference>
<dbReference type="SMART" id="SM00252">
    <property type="entry name" value="SH2"/>
    <property type="match status" value="1"/>
</dbReference>
<dbReference type="SMART" id="SM00326">
    <property type="entry name" value="SH3"/>
    <property type="match status" value="2"/>
</dbReference>
<dbReference type="SUPFAM" id="SSF55550">
    <property type="entry name" value="SH2 domain"/>
    <property type="match status" value="1"/>
</dbReference>
<dbReference type="SUPFAM" id="SSF50044">
    <property type="entry name" value="SH3-domain"/>
    <property type="match status" value="2"/>
</dbReference>
<dbReference type="PROSITE" id="PS50001">
    <property type="entry name" value="SH2"/>
    <property type="match status" value="1"/>
</dbReference>
<dbReference type="PROSITE" id="PS50002">
    <property type="entry name" value="SH3"/>
    <property type="match status" value="2"/>
</dbReference>
<name>GRB2_CHICK</name>
<comment type="function">
    <text evidence="1">Adapter protein that provides a critical link between cell surface growth factor receptors and the Ras signaling pathway.</text>
</comment>
<comment type="subunit">
    <text evidence="1 4">Associates with activated Tyr-phosphorylated EGF receptors and PDGF receptors via its SH2 domain. Also associates to other cellular Tyr-phosphorylated proteins such as SIT1, IRS1, SHC and LNK; probably via the concerted action of both its SH2 and SH3 domains. It also seems to interact with RAS in the signaling pathway leading to DNA synthesis. Binds to and translocates the guanine nucleotide exchange factors SOS (By similarity). Interacts with phosphorylated LAT2.</text>
</comment>
<comment type="interaction">
    <interactant intactId="EBI-7061573">
        <id>Q07883</id>
    </interactant>
    <interactant intactId="EBI-2834978">
        <id>Q7L591</id>
        <label>DOK3</label>
    </interactant>
    <organismsDiffer>true</organismsDiffer>
    <experiments>3</experiments>
</comment>
<comment type="subcellular location">
    <subcellularLocation>
        <location evidence="1">Nucleus</location>
    </subcellularLocation>
    <subcellularLocation>
        <location evidence="1">Cytoplasm</location>
    </subcellularLocation>
    <subcellularLocation>
        <location evidence="1">Endosome</location>
    </subcellularLocation>
    <subcellularLocation>
        <location evidence="1">Golgi apparatus</location>
    </subcellularLocation>
</comment>
<comment type="similarity">
    <text evidence="5">Belongs to the GRB2/sem-5/DRK family.</text>
</comment>
<evidence type="ECO:0000250" key="1"/>
<evidence type="ECO:0000255" key="2">
    <source>
        <dbReference type="PROSITE-ProRule" id="PRU00191"/>
    </source>
</evidence>
<evidence type="ECO:0000255" key="3">
    <source>
        <dbReference type="PROSITE-ProRule" id="PRU00192"/>
    </source>
</evidence>
<evidence type="ECO:0000269" key="4">
    <source>
    </source>
</evidence>
<evidence type="ECO:0000305" key="5"/>
<accession>Q07883</accession>
<gene>
    <name type="primary">GRB2</name>
</gene>
<proteinExistence type="evidence at protein level"/>
<sequence length="217" mass="25076">MEAIAKYDFKATADDELSFKRGDILKVLNEECDQNWYKAELNGKGGFIPKNYIEMKPHPWFFGKIPRAKAEEMLGKQRHDGAFLIRESESAPGDFSLSVKFGNDVQQFKVLRDGAGKYLLWVVKFNSLNELVDYHRSTSVSRNQQIFLRDIEQVPQQPTYVQALFDFDPQEEGELGFRRGDFIQVLDNSDPNWWKGACHGQTGMFPRNYVTPVNRNI</sequence>
<reference key="1">
    <citation type="journal article" date="1993" name="Gene">
        <title>Sequence of a chicken cDNA encoding a GRB2 protein.</title>
        <authorList>
            <person name="Wasenius V.-M."/>
            <person name="Merilainen J."/>
            <person name="Lehto V.-P."/>
        </authorList>
    </citation>
    <scope>NUCLEOTIDE SEQUENCE [MRNA]</scope>
    <source>
        <tissue>Brain</tissue>
    </source>
</reference>
<reference key="2">
    <citation type="journal article" date="2004" name="Immunity">
        <title>Grb2 and the non-T cell activation linker NTAL constitute a Ca(2+)-regulating signal circuit in B lymphocytes.</title>
        <authorList>
            <person name="Stork B."/>
            <person name="Engelke M."/>
            <person name="Frey J."/>
            <person name="Horejsi V."/>
            <person name="Hamm-Baarke A."/>
            <person name="Schraven B."/>
            <person name="Kurosaki T."/>
            <person name="Wienands J."/>
        </authorList>
    </citation>
    <scope>INTERACTION WITH LAT2</scope>
</reference>
<keyword id="KW-0963">Cytoplasm</keyword>
<keyword id="KW-0967">Endosome</keyword>
<keyword id="KW-0333">Golgi apparatus</keyword>
<keyword id="KW-0539">Nucleus</keyword>
<keyword id="KW-1185">Reference proteome</keyword>
<keyword id="KW-0677">Repeat</keyword>
<keyword id="KW-0727">SH2 domain</keyword>
<keyword id="KW-0728">SH3 domain</keyword>
<organism>
    <name type="scientific">Gallus gallus</name>
    <name type="common">Chicken</name>
    <dbReference type="NCBI Taxonomy" id="9031"/>
    <lineage>
        <taxon>Eukaryota</taxon>
        <taxon>Metazoa</taxon>
        <taxon>Chordata</taxon>
        <taxon>Craniata</taxon>
        <taxon>Vertebrata</taxon>
        <taxon>Euteleostomi</taxon>
        <taxon>Archelosauria</taxon>
        <taxon>Archosauria</taxon>
        <taxon>Dinosauria</taxon>
        <taxon>Saurischia</taxon>
        <taxon>Theropoda</taxon>
        <taxon>Coelurosauria</taxon>
        <taxon>Aves</taxon>
        <taxon>Neognathae</taxon>
        <taxon>Galloanserae</taxon>
        <taxon>Galliformes</taxon>
        <taxon>Phasianidae</taxon>
        <taxon>Phasianinae</taxon>
        <taxon>Gallus</taxon>
    </lineage>
</organism>
<feature type="chain" id="PRO_0000088202" description="Growth factor receptor-bound protein 2">
    <location>
        <begin position="1"/>
        <end position="217"/>
    </location>
</feature>
<feature type="domain" description="SH3 1" evidence="3">
    <location>
        <begin position="1"/>
        <end position="58"/>
    </location>
</feature>
<feature type="domain" description="SH2" evidence="2">
    <location>
        <begin position="60"/>
        <end position="152"/>
    </location>
</feature>
<feature type="domain" description="SH3 2" evidence="3">
    <location>
        <begin position="156"/>
        <end position="215"/>
    </location>
</feature>